<name>VE4_HPV33</name>
<reference key="1">
    <citation type="journal article" date="1986" name="J. Virol.">
        <title>Genome organization and nucleotide sequence of human papillomavirus type 33, which is associated with cervical cancer.</title>
        <authorList>
            <person name="Cole S.T."/>
            <person name="Streeck R.E."/>
        </authorList>
    </citation>
    <scope>NUCLEOTIDE SEQUENCE [GENOMIC DNA]</scope>
</reference>
<reference key="2">
    <citation type="journal article" date="1992" name="J. Virol.">
        <title>Human papillomavirus type 33 in a tonsillar carcinoma generates its putative E7 mRNA via two E6* transcript species which are terminated at different early region poly(A) sites.</title>
        <authorList>
            <person name="Snijders P.J.F."/>
            <person name="van den Brule A.J.C."/>
            <person name="Schrijnemakers H.F.J."/>
            <person name="Raaphorst P.M.C."/>
            <person name="Meijer C.J.L.M."/>
            <person name="Walboomers J.M.M."/>
        </authorList>
    </citation>
    <scope>NUCLEOTIDE SEQUENCE [MRNA]</scope>
</reference>
<proteinExistence type="inferred from homology"/>
<protein>
    <recommendedName>
        <fullName>Protein E4</fullName>
    </recommendedName>
    <alternativeName>
        <fullName>E1^E4</fullName>
    </alternativeName>
</protein>
<keyword id="KW-0244">Early protein</keyword>
<keyword id="KW-1035">Host cytoplasm</keyword>
<keyword id="KW-1079">Host G2/M cell cycle arrest by virus</keyword>
<keyword id="KW-1048">Host nucleus</keyword>
<keyword id="KW-0945">Host-virus interaction</keyword>
<keyword id="KW-1121">Modulation of host cell cycle by virus</keyword>
<keyword id="KW-0597">Phosphoprotein</keyword>
<comment type="function">
    <text evidence="1">Contributes to multiple aspects of the viral life cycle including viral genome amplification, suppression of suprabasal cell differentiation and egress of newly formed virions. Induces host cell cycle arrest at the G2 phase by associating with and preventing the nuclear entry of host CDK1/cyclin B1 complexes. Inhibits cellular DNA replication by preventing loading of host replication licensing proteins MCM2 and MCM7 onto chromatin. Within the cytoplasm, associates with host kinase SRPK1, a splicing factor regulator, and inhibits its activity. Therefore, E4 favors expression of late viral transcripts by inhibiting SRPK1-mediated phosphorylation of host serine-arginine (SR) proteins that have critical roles in mRNA metabolism. Late in the infectious cycle, E4 also acts to diminish the integrity of the keratinocyte by disrupting the keratin cytoskeleton and inducing apoptosis through alteration of mitochondrial function to facilitate egress of the newly formed virions.</text>
</comment>
<comment type="subunit">
    <text evidence="1">Assembles into oligomeric complexes. Interacts with host CDK1. Interacts with host SRPK1; this interaction may favor expression of late viral transcripts. Interacts with host cytokeratin components KRT8 and KRT18.</text>
</comment>
<comment type="subcellular location">
    <subcellularLocation>
        <location evidence="1">Host cytoplasm</location>
    </subcellularLocation>
    <subcellularLocation>
        <location evidence="1">Host nucleus</location>
    </subcellularLocation>
</comment>
<comment type="PTM">
    <text evidence="1">Phosphorylated by host ERK. The phosphorylation triggers a structural change that enhances keratin binding and protein stability.</text>
</comment>
<comment type="miscellaneous">
    <text evidence="1">The major E4 form is first synthesized as an E1^E4 fusion protein from spliced E1^E4 transcripts, such that the first few amino acids of the E4 protein are derived from the N terminus of E1.</text>
</comment>
<comment type="similarity">
    <text evidence="3">Belongs to the papillomaviridae E4 protein family.</text>
</comment>
<comment type="sequence caution" evidence="3">
    <conflict type="erroneous initiation">
        <sequence resource="EMBL-CDS" id="AAA46957"/>
    </conflict>
</comment>
<evidence type="ECO:0000250" key="1">
    <source>
        <dbReference type="UniProtKB" id="P06922"/>
    </source>
</evidence>
<evidence type="ECO:0000256" key="2">
    <source>
        <dbReference type="SAM" id="MobiDB-lite"/>
    </source>
</evidence>
<evidence type="ECO:0000305" key="3"/>
<organism>
    <name type="scientific">Human papillomavirus 33</name>
    <dbReference type="NCBI Taxonomy" id="10586"/>
    <lineage>
        <taxon>Viruses</taxon>
        <taxon>Monodnaviria</taxon>
        <taxon>Shotokuvirae</taxon>
        <taxon>Cossaviricota</taxon>
        <taxon>Papovaviricetes</taxon>
        <taxon>Zurhausenvirales</taxon>
        <taxon>Papillomaviridae</taxon>
        <taxon>Firstpapillomavirinae</taxon>
        <taxon>Alphapapillomavirus</taxon>
        <taxon>Alphapapillomavirus 9</taxon>
    </lineage>
</organism>
<gene>
    <name type="primary">E4</name>
</gene>
<dbReference type="EMBL" id="M12732">
    <property type="protein sequence ID" value="AAA46960.1"/>
    <property type="status" value="ALT_SEQ"/>
    <property type="molecule type" value="Genomic_DNA"/>
</dbReference>
<dbReference type="EMBL" id="M12732">
    <property type="protein sequence ID" value="AAA46957.1"/>
    <property type="status" value="ALT_SEQ"/>
    <property type="molecule type" value="Genomic_DNA"/>
</dbReference>
<dbReference type="EMBL" id="X64084">
    <property type="protein sequence ID" value="CAA45431.1"/>
    <property type="molecule type" value="mRNA"/>
</dbReference>
<dbReference type="EMBL" id="X64086">
    <property type="protein sequence ID" value="CAA45437.1"/>
    <property type="molecule type" value="mRNA"/>
</dbReference>
<dbReference type="PIR" id="A03676">
    <property type="entry name" value="W4WL33"/>
</dbReference>
<dbReference type="Proteomes" id="UP000009118">
    <property type="component" value="Genome"/>
</dbReference>
<dbReference type="GO" id="GO:0030430">
    <property type="term" value="C:host cell cytoplasm"/>
    <property type="evidence" value="ECO:0007669"/>
    <property type="project" value="UniProtKB-SubCell"/>
</dbReference>
<dbReference type="GO" id="GO:0042025">
    <property type="term" value="C:host cell nucleus"/>
    <property type="evidence" value="ECO:0007669"/>
    <property type="project" value="UniProtKB-SubCell"/>
</dbReference>
<dbReference type="GO" id="GO:0039592">
    <property type="term" value="P:symbiont-mediated arrest of host cell cycle during G2/M transition"/>
    <property type="evidence" value="ECO:0007669"/>
    <property type="project" value="UniProtKB-KW"/>
</dbReference>
<dbReference type="InterPro" id="IPR003861">
    <property type="entry name" value="Papilloma_E4"/>
</dbReference>
<dbReference type="Pfam" id="PF02711">
    <property type="entry name" value="Pap_E4"/>
    <property type="match status" value="1"/>
</dbReference>
<feature type="chain" id="PRO_0000133270" description="Protein E4">
    <location>
        <begin position="1"/>
        <end position="80"/>
    </location>
</feature>
<feature type="region of interest" description="Disordered" evidence="2">
    <location>
        <begin position="22"/>
        <end position="50"/>
    </location>
</feature>
<feature type="compositionally biased region" description="Basic and acidic residues" evidence="2">
    <location>
        <begin position="23"/>
        <end position="32"/>
    </location>
</feature>
<sequence>MADPEATKYPLLKLLTYRQTTITDHHKQRPNDDDLQTPQTPPSPLQSCSVQTPPWTIEQHVLQLTAQTSSGLCVVLTLHL</sequence>
<accession>P06424</accession>
<accession>Q89423</accession>
<organismHost>
    <name type="scientific">Homo sapiens</name>
    <name type="common">Human</name>
    <dbReference type="NCBI Taxonomy" id="9606"/>
</organismHost>